<evidence type="ECO:0000255" key="1">
    <source>
        <dbReference type="HAMAP-Rule" id="MF_01554"/>
    </source>
</evidence>
<name>GLMM_SYNR3</name>
<dbReference type="EC" id="5.4.2.10" evidence="1"/>
<dbReference type="EMBL" id="CT978603">
    <property type="protein sequence ID" value="CAK29122.1"/>
    <property type="molecule type" value="Genomic_DNA"/>
</dbReference>
<dbReference type="SMR" id="A5GW63"/>
<dbReference type="STRING" id="316278.SynRCC307_2219"/>
<dbReference type="KEGG" id="syr:SynRCC307_2219"/>
<dbReference type="eggNOG" id="COG1109">
    <property type="taxonomic scope" value="Bacteria"/>
</dbReference>
<dbReference type="HOGENOM" id="CLU_016950_7_0_3"/>
<dbReference type="OrthoDB" id="9806956at2"/>
<dbReference type="Proteomes" id="UP000001115">
    <property type="component" value="Chromosome"/>
</dbReference>
<dbReference type="GO" id="GO:0005829">
    <property type="term" value="C:cytosol"/>
    <property type="evidence" value="ECO:0007669"/>
    <property type="project" value="TreeGrafter"/>
</dbReference>
<dbReference type="GO" id="GO:0000287">
    <property type="term" value="F:magnesium ion binding"/>
    <property type="evidence" value="ECO:0007669"/>
    <property type="project" value="UniProtKB-UniRule"/>
</dbReference>
<dbReference type="GO" id="GO:0008966">
    <property type="term" value="F:phosphoglucosamine mutase activity"/>
    <property type="evidence" value="ECO:0007669"/>
    <property type="project" value="UniProtKB-UniRule"/>
</dbReference>
<dbReference type="GO" id="GO:0004615">
    <property type="term" value="F:phosphomannomutase activity"/>
    <property type="evidence" value="ECO:0007669"/>
    <property type="project" value="TreeGrafter"/>
</dbReference>
<dbReference type="GO" id="GO:0005975">
    <property type="term" value="P:carbohydrate metabolic process"/>
    <property type="evidence" value="ECO:0007669"/>
    <property type="project" value="InterPro"/>
</dbReference>
<dbReference type="GO" id="GO:0009252">
    <property type="term" value="P:peptidoglycan biosynthetic process"/>
    <property type="evidence" value="ECO:0007669"/>
    <property type="project" value="TreeGrafter"/>
</dbReference>
<dbReference type="GO" id="GO:0006048">
    <property type="term" value="P:UDP-N-acetylglucosamine biosynthetic process"/>
    <property type="evidence" value="ECO:0007669"/>
    <property type="project" value="TreeGrafter"/>
</dbReference>
<dbReference type="CDD" id="cd05802">
    <property type="entry name" value="GlmM"/>
    <property type="match status" value="1"/>
</dbReference>
<dbReference type="FunFam" id="3.30.310.50:FF:000001">
    <property type="entry name" value="Phosphoglucosamine mutase"/>
    <property type="match status" value="1"/>
</dbReference>
<dbReference type="FunFam" id="3.40.120.10:FF:000001">
    <property type="entry name" value="Phosphoglucosamine mutase"/>
    <property type="match status" value="1"/>
</dbReference>
<dbReference type="FunFam" id="3.40.120.10:FF:000002">
    <property type="entry name" value="Phosphoglucosamine mutase"/>
    <property type="match status" value="1"/>
</dbReference>
<dbReference type="Gene3D" id="3.40.120.10">
    <property type="entry name" value="Alpha-D-Glucose-1,6-Bisphosphate, subunit A, domain 3"/>
    <property type="match status" value="3"/>
</dbReference>
<dbReference type="Gene3D" id="3.30.310.50">
    <property type="entry name" value="Alpha-D-phosphohexomutase, C-terminal domain"/>
    <property type="match status" value="1"/>
</dbReference>
<dbReference type="HAMAP" id="MF_01554_B">
    <property type="entry name" value="GlmM_B"/>
    <property type="match status" value="1"/>
</dbReference>
<dbReference type="InterPro" id="IPR005844">
    <property type="entry name" value="A-D-PHexomutase_a/b/a-I"/>
</dbReference>
<dbReference type="InterPro" id="IPR016055">
    <property type="entry name" value="A-D-PHexomutase_a/b/a-I/II/III"/>
</dbReference>
<dbReference type="InterPro" id="IPR005845">
    <property type="entry name" value="A-D-PHexomutase_a/b/a-II"/>
</dbReference>
<dbReference type="InterPro" id="IPR005846">
    <property type="entry name" value="A-D-PHexomutase_a/b/a-III"/>
</dbReference>
<dbReference type="InterPro" id="IPR005843">
    <property type="entry name" value="A-D-PHexomutase_C"/>
</dbReference>
<dbReference type="InterPro" id="IPR036900">
    <property type="entry name" value="A-D-PHexomutase_C_sf"/>
</dbReference>
<dbReference type="InterPro" id="IPR016066">
    <property type="entry name" value="A-D-PHexomutase_CS"/>
</dbReference>
<dbReference type="InterPro" id="IPR005841">
    <property type="entry name" value="Alpha-D-phosphohexomutase_SF"/>
</dbReference>
<dbReference type="InterPro" id="IPR006352">
    <property type="entry name" value="GlmM_bact"/>
</dbReference>
<dbReference type="InterPro" id="IPR050060">
    <property type="entry name" value="Phosphoglucosamine_mutase"/>
</dbReference>
<dbReference type="NCBIfam" id="TIGR01455">
    <property type="entry name" value="glmM"/>
    <property type="match status" value="1"/>
</dbReference>
<dbReference type="PANTHER" id="PTHR42946:SF1">
    <property type="entry name" value="PHOSPHOGLUCOMUTASE (ALPHA-D-GLUCOSE-1,6-BISPHOSPHATE-DEPENDENT)"/>
    <property type="match status" value="1"/>
</dbReference>
<dbReference type="PANTHER" id="PTHR42946">
    <property type="entry name" value="PHOSPHOHEXOSE MUTASE"/>
    <property type="match status" value="1"/>
</dbReference>
<dbReference type="Pfam" id="PF02878">
    <property type="entry name" value="PGM_PMM_I"/>
    <property type="match status" value="1"/>
</dbReference>
<dbReference type="Pfam" id="PF02879">
    <property type="entry name" value="PGM_PMM_II"/>
    <property type="match status" value="1"/>
</dbReference>
<dbReference type="Pfam" id="PF02880">
    <property type="entry name" value="PGM_PMM_III"/>
    <property type="match status" value="1"/>
</dbReference>
<dbReference type="Pfam" id="PF00408">
    <property type="entry name" value="PGM_PMM_IV"/>
    <property type="match status" value="1"/>
</dbReference>
<dbReference type="PRINTS" id="PR00509">
    <property type="entry name" value="PGMPMM"/>
</dbReference>
<dbReference type="SUPFAM" id="SSF55957">
    <property type="entry name" value="Phosphoglucomutase, C-terminal domain"/>
    <property type="match status" value="1"/>
</dbReference>
<dbReference type="SUPFAM" id="SSF53738">
    <property type="entry name" value="Phosphoglucomutase, first 3 domains"/>
    <property type="match status" value="3"/>
</dbReference>
<dbReference type="PROSITE" id="PS00710">
    <property type="entry name" value="PGM_PMM"/>
    <property type="match status" value="1"/>
</dbReference>
<accession>A5GW63</accession>
<protein>
    <recommendedName>
        <fullName evidence="1">Phosphoglucosamine mutase</fullName>
        <ecNumber evidence="1">5.4.2.10</ecNumber>
    </recommendedName>
</protein>
<gene>
    <name evidence="1" type="primary">glmM</name>
    <name type="ordered locus">SynRCC307_2219</name>
</gene>
<keyword id="KW-0413">Isomerase</keyword>
<keyword id="KW-0460">Magnesium</keyword>
<keyword id="KW-0479">Metal-binding</keyword>
<keyword id="KW-0597">Phosphoprotein</keyword>
<keyword id="KW-1185">Reference proteome</keyword>
<proteinExistence type="inferred from homology"/>
<reference key="1">
    <citation type="submission" date="2006-05" db="EMBL/GenBank/DDBJ databases">
        <authorList>
            <consortium name="Genoscope"/>
        </authorList>
    </citation>
    <scope>NUCLEOTIDE SEQUENCE [LARGE SCALE GENOMIC DNA]</scope>
    <source>
        <strain>RCC307</strain>
    </source>
</reference>
<comment type="function">
    <text evidence="1">Catalyzes the conversion of glucosamine-6-phosphate to glucosamine-1-phosphate.</text>
</comment>
<comment type="catalytic activity">
    <reaction evidence="1">
        <text>alpha-D-glucosamine 1-phosphate = D-glucosamine 6-phosphate</text>
        <dbReference type="Rhea" id="RHEA:23424"/>
        <dbReference type="ChEBI" id="CHEBI:58516"/>
        <dbReference type="ChEBI" id="CHEBI:58725"/>
        <dbReference type="EC" id="5.4.2.10"/>
    </reaction>
</comment>
<comment type="cofactor">
    <cofactor evidence="1">
        <name>Mg(2+)</name>
        <dbReference type="ChEBI" id="CHEBI:18420"/>
    </cofactor>
    <text evidence="1">Binds 1 Mg(2+) ion per subunit.</text>
</comment>
<comment type="PTM">
    <text evidence="1">Activated by phosphorylation.</text>
</comment>
<comment type="similarity">
    <text evidence="1">Belongs to the phosphohexose mutase family.</text>
</comment>
<organism>
    <name type="scientific">Synechococcus sp. (strain RCC307)</name>
    <dbReference type="NCBI Taxonomy" id="316278"/>
    <lineage>
        <taxon>Bacteria</taxon>
        <taxon>Bacillati</taxon>
        <taxon>Cyanobacteriota</taxon>
        <taxon>Cyanophyceae</taxon>
        <taxon>Synechococcales</taxon>
        <taxon>Synechococcaceae</taxon>
        <taxon>Synechococcus</taxon>
    </lineage>
</organism>
<sequence>MADLASHPVGQPLGGGGVSFGTDGIRGRVGTVMTPALALQVGYWSGQVLPGDAPVLLGMDSRSSGPMLVAALEAGLTAAGREVWTLGLCPTPAVARLVNQFQAAGGLMVSASHNPPEDNGIKLFGPSGAKLSRDQQQAIEAGLRGEVRPALTSCGPTQRRTELLESYTALLENSLEGRRLDGRRIVLDLCWGSATSCAESLFRRLGAEVIALHSQPDGAAINVGCGSTHLEPLRQAVMEHGAEMGFAFDGDADRVLAVDGQGRLVDGDHILYLWGSALADADALPQQRLVATVMSNLGFERAWTARGGQLERTAVGDQHVHAAMAELGAVLGGEQSGHIISADHGMSGDGVLTALQLAALLQPGETLSDRVDQSFRSFPQRLRNVRVPDRDRRKGWQQCDGLTTAIAAAEAAMGDEGRVLVRASGTEPLLRVMVEASSQEQVDHWTDHLSELADQLLNV</sequence>
<feature type="chain" id="PRO_0000305686" description="Phosphoglucosamine mutase">
    <location>
        <begin position="1"/>
        <end position="459"/>
    </location>
</feature>
<feature type="active site" description="Phosphoserine intermediate" evidence="1">
    <location>
        <position position="112"/>
    </location>
</feature>
<feature type="binding site" description="via phosphate group" evidence="1">
    <location>
        <position position="112"/>
    </location>
    <ligand>
        <name>Mg(2+)</name>
        <dbReference type="ChEBI" id="CHEBI:18420"/>
    </ligand>
</feature>
<feature type="binding site" evidence="1">
    <location>
        <position position="249"/>
    </location>
    <ligand>
        <name>Mg(2+)</name>
        <dbReference type="ChEBI" id="CHEBI:18420"/>
    </ligand>
</feature>
<feature type="binding site" evidence="1">
    <location>
        <position position="251"/>
    </location>
    <ligand>
        <name>Mg(2+)</name>
        <dbReference type="ChEBI" id="CHEBI:18420"/>
    </ligand>
</feature>
<feature type="binding site" evidence="1">
    <location>
        <position position="253"/>
    </location>
    <ligand>
        <name>Mg(2+)</name>
        <dbReference type="ChEBI" id="CHEBI:18420"/>
    </ligand>
</feature>
<feature type="modified residue" description="Phosphoserine" evidence="1">
    <location>
        <position position="112"/>
    </location>
</feature>